<sequence length="126" mass="13950">MPEPAKSAPAPKKGSKKAVTKTQKKGDKKRRKSRKESYSIYVYKVLKQVHPDTGISSKAMGIMNSFVNDIFERIAGEASRLAHYNKRSTITSREIQTAVRLLLPGELAKHAVSEGTKAVTKYTSSK</sequence>
<evidence type="ECO:0000250" key="1"/>
<evidence type="ECO:0000250" key="2">
    <source>
        <dbReference type="UniProtKB" id="P33778"/>
    </source>
</evidence>
<evidence type="ECO:0000250" key="3">
    <source>
        <dbReference type="UniProtKB" id="P62807"/>
    </source>
</evidence>
<evidence type="ECO:0000256" key="4">
    <source>
        <dbReference type="SAM" id="MobiDB-lite"/>
    </source>
</evidence>
<evidence type="ECO:0000269" key="5">
    <source>
    </source>
</evidence>
<evidence type="ECO:0000269" key="6">
    <source>
    </source>
</evidence>
<evidence type="ECO:0000305" key="7"/>
<evidence type="ECO:0000305" key="8">
    <source>
    </source>
</evidence>
<reference key="1">
    <citation type="journal article" date="1991" name="Gene">
        <title>Nucleotide sequence of a member of the chicken H2B histone-encoding gene family.</title>
        <authorList>
            <person name="Nakayama T."/>
            <person name="Setoguchi Y."/>
        </authorList>
    </citation>
    <scope>NUCLEOTIDE SEQUENCE [GENOMIC DNA]</scope>
    <source>
        <strain>White leghorn</strain>
    </source>
</reference>
<reference key="2">
    <citation type="journal article" date="1996" name="DNA Res.">
        <title>Organization of the chicken histone genes in a major gene cluster and generation of an almost complete set of the core histone protein sequences.</title>
        <authorList>
            <person name="Takami Y."/>
            <person name="Higashio M."/>
            <person name="Fukuoka T."/>
            <person name="Takechi S."/>
            <person name="Nakayama T."/>
        </authorList>
    </citation>
    <scope>NUCLEOTIDE SEQUENCE [GENOMIC DNA]</scope>
    <scope>NOMENCLATURE</scope>
    <source>
        <strain>White leghorn</strain>
    </source>
</reference>
<reference key="3">
    <citation type="journal article" date="1989" name="Biochemistry">
        <title>Ubiquitinated histone H2B is preferentially located in transcriptionally active chromatin.</title>
        <authorList>
            <person name="Nickel B.E."/>
            <person name="Allis C.D."/>
            <person name="Davie J.R."/>
        </authorList>
    </citation>
    <scope>UBIQUITINATION</scope>
</reference>
<reference key="4">
    <citation type="journal article" date="2003" name="Cell">
        <title>Apoptotic phosphorylation of histone H2B is mediated by mammalian sterile twenty kinase.</title>
        <authorList>
            <person name="Cheung W.L."/>
            <person name="Ajiro K."/>
            <person name="Samejima K."/>
            <person name="Kloc M."/>
            <person name="Cheung P."/>
            <person name="Mizzen C.A."/>
            <person name="Beeser A."/>
            <person name="Etkin L.D."/>
            <person name="Chernoff J."/>
            <person name="Earnshaw W.C."/>
            <person name="Allis C.D."/>
        </authorList>
    </citation>
    <scope>PHOSPHORYLATION AT SER-15</scope>
</reference>
<reference key="5">
    <citation type="journal article" date="2003" name="J. Biol. Chem.">
        <title>Acetylation of histone H2B mirrors that of H4 and H3 at the chicken beta-globin locus but not at housekeeping genes.</title>
        <authorList>
            <person name="Myers F.A."/>
            <person name="Chong W."/>
            <person name="Evans D.R."/>
            <person name="Thorne A.W."/>
            <person name="Crane-Robinson C."/>
        </authorList>
    </citation>
    <scope>ACETYLATION AT LYS-6; LYS-13; LYS-16 AND LYS-21</scope>
</reference>
<keyword id="KW-0002">3D-structure</keyword>
<keyword id="KW-0007">Acetylation</keyword>
<keyword id="KW-0158">Chromosome</keyword>
<keyword id="KW-0238">DNA-binding</keyword>
<keyword id="KW-0325">Glycoprotein</keyword>
<keyword id="KW-1017">Isopeptide bond</keyword>
<keyword id="KW-0544">Nucleosome core</keyword>
<keyword id="KW-0539">Nucleus</keyword>
<keyword id="KW-0597">Phosphoprotein</keyword>
<keyword id="KW-1185">Reference proteome</keyword>
<keyword id="KW-0832">Ubl conjugation</keyword>
<protein>
    <recommendedName>
        <fullName>Histone H2B 5</fullName>
    </recommendedName>
    <alternativeName>
        <fullName>H2B V</fullName>
    </alternativeName>
</protein>
<proteinExistence type="evidence at protein level"/>
<name>H2B5_CHICK</name>
<feature type="initiator methionine" description="Removed" evidence="1">
    <location>
        <position position="1"/>
    </location>
</feature>
<feature type="chain" id="PRO_0000244864" description="Histone H2B 5">
    <location>
        <begin position="2"/>
        <end position="126"/>
    </location>
</feature>
<feature type="region of interest" description="Disordered" evidence="4">
    <location>
        <begin position="1"/>
        <end position="35"/>
    </location>
</feature>
<feature type="compositionally biased region" description="Low complexity" evidence="4">
    <location>
        <begin position="1"/>
        <end position="12"/>
    </location>
</feature>
<feature type="compositionally biased region" description="Basic residues" evidence="4">
    <location>
        <begin position="13"/>
        <end position="34"/>
    </location>
</feature>
<feature type="modified residue" description="N6-acetyllysine" evidence="6">
    <location>
        <position position="6"/>
    </location>
</feature>
<feature type="modified residue" description="N6-acetyllysine" evidence="6">
    <location>
        <position position="13"/>
    </location>
</feature>
<feature type="modified residue" description="Phosphoserine" evidence="5">
    <location>
        <position position="15"/>
    </location>
</feature>
<feature type="modified residue" description="N6-acetyllysine" evidence="6">
    <location>
        <position position="16"/>
    </location>
</feature>
<feature type="modified residue" description="N6-acetyllysine" evidence="6">
    <location>
        <position position="21"/>
    </location>
</feature>
<feature type="glycosylation site" description="O-linked (GlcNAc) serine" evidence="3">
    <location>
        <position position="113"/>
    </location>
</feature>
<feature type="cross-link" description="Glycyl lysine isopeptide (Lys-Gly) (interchain with G-Cter in ubiquitin)" evidence="8">
    <location>
        <position position="121"/>
    </location>
</feature>
<comment type="function">
    <text>Core component of nucleosome. Nucleosomes wrap and compact DNA into chromatin, limiting DNA accessibility to the cellular machineries which require DNA as a template. Histones thereby play a central role in transcription regulation, DNA repair, DNA replication and chromosomal stability. DNA accessibility is regulated via a complex set of post-translational modifications of histones, also called histone code, and nucleosome remodeling.</text>
</comment>
<comment type="subunit">
    <text>The nucleosome is a histone octamer containing two molecules each of H2A, H2B, H3 and H4 assembled in one H3-H4 heterotetramer and two H2A-H2B heterodimers. The octamer wraps approximately 147 bp of DNA.</text>
</comment>
<comment type="subcellular location">
    <subcellularLocation>
        <location>Nucleus</location>
    </subcellularLocation>
    <subcellularLocation>
        <location>Chromosome</location>
    </subcellularLocation>
</comment>
<comment type="PTM">
    <text evidence="2">Monoubiquitination of Lys-121 by the BRE1 gives a specific tag for epigenetic transcriptional activation and is also prerequisite for histone H3 'Lys-4' and 'Lys-79' methylation.</text>
</comment>
<comment type="PTM">
    <text evidence="5">Phosphorylated on Ser-15 during apoptosis; which facilitates apoptotic chromatin condensation.</text>
</comment>
<comment type="PTM">
    <text evidence="3">GlcNAcylation at Ser-113 promotes monoubiquitination of Lys-121. It fluctuates in response to extracellular glucose, and associates with transcribed genes (By similarity).</text>
</comment>
<comment type="similarity">
    <text evidence="7">Belongs to the histone H2B family.</text>
</comment>
<accession>P0C1H4</accession>
<accession>P02279</accession>
<organism>
    <name type="scientific">Gallus gallus</name>
    <name type="common">Chicken</name>
    <dbReference type="NCBI Taxonomy" id="9031"/>
    <lineage>
        <taxon>Eukaryota</taxon>
        <taxon>Metazoa</taxon>
        <taxon>Chordata</taxon>
        <taxon>Craniata</taxon>
        <taxon>Vertebrata</taxon>
        <taxon>Euteleostomi</taxon>
        <taxon>Archelosauria</taxon>
        <taxon>Archosauria</taxon>
        <taxon>Dinosauria</taxon>
        <taxon>Saurischia</taxon>
        <taxon>Theropoda</taxon>
        <taxon>Coelurosauria</taxon>
        <taxon>Aves</taxon>
        <taxon>Neognathae</taxon>
        <taxon>Galloanserae</taxon>
        <taxon>Galliformes</taxon>
        <taxon>Phasianidae</taxon>
        <taxon>Phasianinae</taxon>
        <taxon>Gallus</taxon>
    </lineage>
</organism>
<gene>
    <name type="primary">H2B-V</name>
</gene>
<dbReference type="EMBL" id="M57901">
    <property type="protein sequence ID" value="AAA48792.1"/>
    <property type="molecule type" value="Genomic_DNA"/>
</dbReference>
<dbReference type="PIR" id="JH0362">
    <property type="entry name" value="JH0362"/>
</dbReference>
<dbReference type="RefSeq" id="NP_001073189.1">
    <property type="nucleotide sequence ID" value="NM_001079721.1"/>
</dbReference>
<dbReference type="PDB" id="2XQL">
    <property type="method" value="EM"/>
    <property type="resolution" value="19.50 A"/>
    <property type="chains" value="B/D/F/H/J=37-126"/>
</dbReference>
<dbReference type="PDBsum" id="2XQL"/>
<dbReference type="EMDB" id="EMD-1777"/>
<dbReference type="SMR" id="P0C1H4"/>
<dbReference type="FunCoup" id="P0C1H4">
    <property type="interactions" value="715"/>
</dbReference>
<dbReference type="STRING" id="9031.ENSGALP00000069619"/>
<dbReference type="GlyCosmos" id="P0C1H4">
    <property type="glycosylation" value="1 site, No reported glycans"/>
</dbReference>
<dbReference type="GlyGen" id="P0C1H4">
    <property type="glycosylation" value="1 site"/>
</dbReference>
<dbReference type="iPTMnet" id="P0C1H4"/>
<dbReference type="PaxDb" id="9031-ENSGALP00000037260"/>
<dbReference type="Ensembl" id="ENSGALT00010034597.1">
    <property type="protein sequence ID" value="ENSGALP00010020308.1"/>
    <property type="gene ID" value="ENSGALG00010014375.1"/>
</dbReference>
<dbReference type="GeneID" id="417957"/>
<dbReference type="KEGG" id="gga:417957"/>
<dbReference type="CTD" id="417957"/>
<dbReference type="VEuPathDB" id="HostDB:geneid_417957"/>
<dbReference type="eggNOG" id="KOG1744">
    <property type="taxonomic scope" value="Eukaryota"/>
</dbReference>
<dbReference type="GeneTree" id="ENSGT01110000267181"/>
<dbReference type="HOGENOM" id="CLU_075666_2_1_1"/>
<dbReference type="InParanoid" id="P0C1H4"/>
<dbReference type="OMA" id="RITIEAC"/>
<dbReference type="OrthoDB" id="9117938at2759"/>
<dbReference type="PhylomeDB" id="P0C1H4"/>
<dbReference type="TreeFam" id="TF300212"/>
<dbReference type="Reactome" id="R-GGA-201722">
    <property type="pathway name" value="Formation of the beta-catenin:TCF transactivating complex"/>
</dbReference>
<dbReference type="Reactome" id="R-GGA-212300">
    <property type="pathway name" value="PRC2 methylates histones and DNA"/>
</dbReference>
<dbReference type="Reactome" id="R-GGA-2299718">
    <property type="pathway name" value="Condensation of Prophase Chromosomes"/>
</dbReference>
<dbReference type="Reactome" id="R-GGA-2559580">
    <property type="pathway name" value="Oxidative Stress Induced Senescence"/>
</dbReference>
<dbReference type="Reactome" id="R-GGA-3214815">
    <property type="pathway name" value="HDACs deacetylate histones"/>
</dbReference>
<dbReference type="Reactome" id="R-GGA-3214847">
    <property type="pathway name" value="HATs acetylate histones"/>
</dbReference>
<dbReference type="Reactome" id="R-GGA-5250924">
    <property type="pathway name" value="B-WICH complex positively regulates rRNA expression"/>
</dbReference>
<dbReference type="Reactome" id="R-GGA-5578749">
    <property type="pathway name" value="Transcriptional regulation by small RNAs"/>
</dbReference>
<dbReference type="Reactome" id="R-GGA-5625886">
    <property type="pathway name" value="Activated PKN1 stimulates transcription of AR (androgen receptor) regulated genes KLK2 and KLK3"/>
</dbReference>
<dbReference type="Reactome" id="R-GGA-5689880">
    <property type="pathway name" value="Ub-specific processing proteases"/>
</dbReference>
<dbReference type="Reactome" id="R-GGA-5693565">
    <property type="pathway name" value="Recruitment and ATM-mediated phosphorylation of repair and signaling proteins at DNA double strand breaks"/>
</dbReference>
<dbReference type="Reactome" id="R-GGA-5693571">
    <property type="pathway name" value="Nonhomologous End-Joining (NHEJ)"/>
</dbReference>
<dbReference type="Reactome" id="R-GGA-5693607">
    <property type="pathway name" value="Processing of DNA double-strand break ends"/>
</dbReference>
<dbReference type="Reactome" id="R-GGA-606279">
    <property type="pathway name" value="Deposition of new CENPA-containing nucleosomes at the centromere"/>
</dbReference>
<dbReference type="Reactome" id="R-GGA-68616">
    <property type="pathway name" value="Assembly of the ORC complex at the origin of replication"/>
</dbReference>
<dbReference type="Reactome" id="R-GGA-69473">
    <property type="pathway name" value="G2/M DNA damage checkpoint"/>
</dbReference>
<dbReference type="Reactome" id="R-GGA-73728">
    <property type="pathway name" value="RNA Polymerase I Promoter Opening"/>
</dbReference>
<dbReference type="Reactome" id="R-GGA-73772">
    <property type="pathway name" value="RNA Polymerase I Promoter Escape"/>
</dbReference>
<dbReference type="Reactome" id="R-GGA-8936459">
    <property type="pathway name" value="RUNX1 regulates genes involved in megakaryocyte differentiation and platelet function"/>
</dbReference>
<dbReference type="Reactome" id="R-GGA-9018519">
    <property type="pathway name" value="Estrogen-dependent gene expression"/>
</dbReference>
<dbReference type="Reactome" id="R-GGA-9841922">
    <property type="pathway name" value="MLL4 and MLL3 complexes regulate expression of PPARG target genes in adipogenesis and hepatic steatosis"/>
</dbReference>
<dbReference type="Reactome" id="R-GGA-9843940">
    <property type="pathway name" value="Regulation of endogenous retroelements by KRAB-ZFP proteins"/>
</dbReference>
<dbReference type="Reactome" id="R-GGA-9843970">
    <property type="pathway name" value="Regulation of endogenous retroelements by the Human Silencing Hub (HUSH) complex"/>
</dbReference>
<dbReference type="EvolutionaryTrace" id="P0C1H4"/>
<dbReference type="PRO" id="PR:P0C1H4"/>
<dbReference type="Proteomes" id="UP000000539">
    <property type="component" value="Chromosome 1"/>
</dbReference>
<dbReference type="Bgee" id="ENSGALG00000052649">
    <property type="expression patterns" value="Expressed in testis and 12 other cell types or tissues"/>
</dbReference>
<dbReference type="GO" id="GO:0000786">
    <property type="term" value="C:nucleosome"/>
    <property type="evidence" value="ECO:0007669"/>
    <property type="project" value="UniProtKB-KW"/>
</dbReference>
<dbReference type="GO" id="GO:0005634">
    <property type="term" value="C:nucleus"/>
    <property type="evidence" value="ECO:0007669"/>
    <property type="project" value="UniProtKB-SubCell"/>
</dbReference>
<dbReference type="GO" id="GO:0003677">
    <property type="term" value="F:DNA binding"/>
    <property type="evidence" value="ECO:0007669"/>
    <property type="project" value="UniProtKB-KW"/>
</dbReference>
<dbReference type="GO" id="GO:0046982">
    <property type="term" value="F:protein heterodimerization activity"/>
    <property type="evidence" value="ECO:0007669"/>
    <property type="project" value="InterPro"/>
</dbReference>
<dbReference type="GO" id="GO:0030527">
    <property type="term" value="F:structural constituent of chromatin"/>
    <property type="evidence" value="ECO:0007669"/>
    <property type="project" value="InterPro"/>
</dbReference>
<dbReference type="CDD" id="cd22910">
    <property type="entry name" value="HFD_H2B"/>
    <property type="match status" value="1"/>
</dbReference>
<dbReference type="DisProt" id="DP01649"/>
<dbReference type="FunFam" id="1.10.20.10:FF:000003">
    <property type="entry name" value="Histone H2B"/>
    <property type="match status" value="1"/>
</dbReference>
<dbReference type="Gene3D" id="1.10.20.10">
    <property type="entry name" value="Histone, subunit A"/>
    <property type="match status" value="1"/>
</dbReference>
<dbReference type="InterPro" id="IPR009072">
    <property type="entry name" value="Histone-fold"/>
</dbReference>
<dbReference type="InterPro" id="IPR007125">
    <property type="entry name" value="Histone_H2A/H2B/H3"/>
</dbReference>
<dbReference type="InterPro" id="IPR000558">
    <property type="entry name" value="Histone_H2B"/>
</dbReference>
<dbReference type="InterPro" id="IPR055333">
    <property type="entry name" value="HISTONE_H2B_site"/>
</dbReference>
<dbReference type="PANTHER" id="PTHR23428">
    <property type="entry name" value="HISTONE H2B"/>
    <property type="match status" value="1"/>
</dbReference>
<dbReference type="Pfam" id="PF00125">
    <property type="entry name" value="Histone"/>
    <property type="match status" value="1"/>
</dbReference>
<dbReference type="PRINTS" id="PR00621">
    <property type="entry name" value="HISTONEH2B"/>
</dbReference>
<dbReference type="SMART" id="SM00427">
    <property type="entry name" value="H2B"/>
    <property type="match status" value="1"/>
</dbReference>
<dbReference type="SUPFAM" id="SSF47113">
    <property type="entry name" value="Histone-fold"/>
    <property type="match status" value="1"/>
</dbReference>
<dbReference type="PROSITE" id="PS00357">
    <property type="entry name" value="HISTONE_H2B"/>
    <property type="match status" value="1"/>
</dbReference>